<organism>
    <name type="scientific">Drosophila ananassae</name>
    <name type="common">Fruit fly</name>
    <dbReference type="NCBI Taxonomy" id="7217"/>
    <lineage>
        <taxon>Eukaryota</taxon>
        <taxon>Metazoa</taxon>
        <taxon>Ecdysozoa</taxon>
        <taxon>Arthropoda</taxon>
        <taxon>Hexapoda</taxon>
        <taxon>Insecta</taxon>
        <taxon>Pterygota</taxon>
        <taxon>Neoptera</taxon>
        <taxon>Endopterygota</taxon>
        <taxon>Diptera</taxon>
        <taxon>Brachycera</taxon>
        <taxon>Muscomorpha</taxon>
        <taxon>Ephydroidea</taxon>
        <taxon>Drosophilidae</taxon>
        <taxon>Drosophila</taxon>
        <taxon>Sophophora</taxon>
    </lineage>
</organism>
<dbReference type="EMBL" id="FN546432">
    <property type="protein sequence ID" value="CBE66731.1"/>
    <property type="molecule type" value="Genomic_DNA"/>
</dbReference>
<dbReference type="EMBL" id="FN546433">
    <property type="protein sequence ID" value="CBE66732.1"/>
    <property type="molecule type" value="Genomic_DNA"/>
</dbReference>
<dbReference type="EMBL" id="FN546434">
    <property type="protein sequence ID" value="CBE66733.1"/>
    <property type="molecule type" value="Genomic_DNA"/>
</dbReference>
<dbReference type="EMBL" id="FN546435">
    <property type="protein sequence ID" value="CBE66734.1"/>
    <property type="molecule type" value="Genomic_DNA"/>
</dbReference>
<dbReference type="EMBL" id="FN546436">
    <property type="protein sequence ID" value="CBE66735.1"/>
    <property type="molecule type" value="Genomic_DNA"/>
</dbReference>
<dbReference type="EMBL" id="FN546437">
    <property type="protein sequence ID" value="CBE66736.1"/>
    <property type="molecule type" value="Genomic_DNA"/>
</dbReference>
<dbReference type="EMBL" id="FN546438">
    <property type="protein sequence ID" value="CBE66737.1"/>
    <property type="molecule type" value="Genomic_DNA"/>
</dbReference>
<dbReference type="EMBL" id="FN546439">
    <property type="protein sequence ID" value="CBE66738.1"/>
    <property type="molecule type" value="Genomic_DNA"/>
</dbReference>
<dbReference type="EMBL" id="CH902618">
    <property type="protein sequence ID" value="EDV41314.1"/>
    <property type="molecule type" value="Genomic_DNA"/>
</dbReference>
<dbReference type="SMR" id="D1GY43"/>
<dbReference type="FunCoup" id="D1GY43">
    <property type="interactions" value="2395"/>
</dbReference>
<dbReference type="STRING" id="7217.D1GY43"/>
<dbReference type="EnsemblMetazoa" id="FBtr0128179">
    <property type="protein sequence ID" value="FBpp0126671"/>
    <property type="gene ID" value="FBgn0100473"/>
</dbReference>
<dbReference type="EnsemblMetazoa" id="XM_001958472.4">
    <property type="protein sequence ID" value="XP_001958508.1"/>
    <property type="gene ID" value="LOC6506120"/>
</dbReference>
<dbReference type="GeneID" id="6506120"/>
<dbReference type="KEGG" id="dan:6506120"/>
<dbReference type="CTD" id="79876"/>
<dbReference type="eggNOG" id="KOG2336">
    <property type="taxonomic scope" value="Eukaryota"/>
</dbReference>
<dbReference type="HOGENOM" id="CLU_013325_0_1_1"/>
<dbReference type="InParanoid" id="D1GY43"/>
<dbReference type="OMA" id="MNIVKDY"/>
<dbReference type="OrthoDB" id="206053at2759"/>
<dbReference type="PhylomeDB" id="D1GY43"/>
<dbReference type="Proteomes" id="UP000007801">
    <property type="component" value="Unassembled WGS sequence"/>
</dbReference>
<dbReference type="GO" id="GO:0005829">
    <property type="term" value="C:cytosol"/>
    <property type="evidence" value="ECO:0007669"/>
    <property type="project" value="TreeGrafter"/>
</dbReference>
<dbReference type="GO" id="GO:0005524">
    <property type="term" value="F:ATP binding"/>
    <property type="evidence" value="ECO:0007669"/>
    <property type="project" value="UniProtKB-KW"/>
</dbReference>
<dbReference type="GO" id="GO:0046872">
    <property type="term" value="F:metal ion binding"/>
    <property type="evidence" value="ECO:0007669"/>
    <property type="project" value="UniProtKB-KW"/>
</dbReference>
<dbReference type="GO" id="GO:0071566">
    <property type="term" value="F:UFM1 activating enzyme activity"/>
    <property type="evidence" value="ECO:0007669"/>
    <property type="project" value="TreeGrafter"/>
</dbReference>
<dbReference type="GO" id="GO:0071569">
    <property type="term" value="P:protein ufmylation"/>
    <property type="evidence" value="ECO:0007669"/>
    <property type="project" value="TreeGrafter"/>
</dbReference>
<dbReference type="CDD" id="cd00757">
    <property type="entry name" value="ThiF_MoeB_HesA_family"/>
    <property type="match status" value="1"/>
</dbReference>
<dbReference type="FunFam" id="3.40.50.720:FF:000066">
    <property type="entry name" value="Putative ubiquitin-like modifier-activating enzyme 5"/>
    <property type="match status" value="1"/>
</dbReference>
<dbReference type="Gene3D" id="3.40.50.720">
    <property type="entry name" value="NAD(P)-binding Rossmann-like Domain"/>
    <property type="match status" value="1"/>
</dbReference>
<dbReference type="InterPro" id="IPR029752">
    <property type="entry name" value="D-isomer_DH_CS1"/>
</dbReference>
<dbReference type="InterPro" id="IPR045886">
    <property type="entry name" value="ThiF/MoeB/HesA"/>
</dbReference>
<dbReference type="InterPro" id="IPR000594">
    <property type="entry name" value="ThiF_NAD_FAD-bd"/>
</dbReference>
<dbReference type="InterPro" id="IPR035985">
    <property type="entry name" value="Ubiquitin-activating_enz"/>
</dbReference>
<dbReference type="PANTHER" id="PTHR10953">
    <property type="entry name" value="UBIQUITIN-ACTIVATING ENZYME E1"/>
    <property type="match status" value="1"/>
</dbReference>
<dbReference type="PANTHER" id="PTHR10953:SF9">
    <property type="entry name" value="UBIQUITIN-LIKE MODIFIER-ACTIVATING ENZYME 5"/>
    <property type="match status" value="1"/>
</dbReference>
<dbReference type="Pfam" id="PF00899">
    <property type="entry name" value="ThiF"/>
    <property type="match status" value="1"/>
</dbReference>
<dbReference type="SUPFAM" id="SSF69572">
    <property type="entry name" value="Activating enzymes of the ubiquitin-like proteins"/>
    <property type="match status" value="1"/>
</dbReference>
<gene>
    <name type="ORF">GF23479</name>
</gene>
<comment type="function">
    <text evidence="1">E1-like enzyme which activates UFM1.</text>
</comment>
<comment type="similarity">
    <text evidence="3">Belongs to the ubiquitin-activating E1 family. UBA5 subfamily.</text>
</comment>
<proteinExistence type="inferred from homology"/>
<protein>
    <recommendedName>
        <fullName>Ubiquitin-like modifier-activating enzyme 5</fullName>
        <shortName>Ubiquitin-activating enzyme 5</shortName>
    </recommendedName>
</protein>
<reference key="1">
    <citation type="journal article" date="2009" name="BMC Evol. Biol.">
        <title>Molecular evolution of sex-biased genes in the Drosophila ananassae subgroup.</title>
        <authorList>
            <person name="Grath S."/>
            <person name="Baines J.F."/>
            <person name="Parsch J."/>
        </authorList>
    </citation>
    <scope>NUCLEOTIDE SEQUENCE [GENOMIC DNA]</scope>
    <scope>VARIANTS ALA-373 AND GLY-373</scope>
    <source>
        <strain>BKK11</strain>
        <strain>BKK13</strain>
        <strain>BKK16</strain>
        <strain>BKK4</strain>
        <strain>BKK5</strain>
        <strain>BKK7</strain>
        <strain>BKK8</strain>
        <strain>BKK9</strain>
    </source>
</reference>
<reference key="2">
    <citation type="journal article" date="2007" name="Nature">
        <title>Evolution of genes and genomes on the Drosophila phylogeny.</title>
        <authorList>
            <consortium name="Drosophila 12 genomes consortium"/>
        </authorList>
    </citation>
    <scope>NUCLEOTIDE SEQUENCE [LARGE SCALE GENOMIC DNA]</scope>
    <source>
        <strain>Tucson 14024-0371.13</strain>
    </source>
</reference>
<evidence type="ECO:0000250" key="1"/>
<evidence type="ECO:0000269" key="2">
    <source>
    </source>
</evidence>
<evidence type="ECO:0000305" key="3"/>
<sequence length="396" mass="43896">MSHAIDELQAIIAELKVELEEQKTSNRQARSRIDRMSAEVVDSNPYSRLMALQRMNIVKEYERIRDKAVAVVGVGGVGSVTADMLTRCGIGKLILFDYDKVELANMNRLFFTPDQAGLSKVEAAARTLNFINPDVQIETHNYNITTVDNFDRFLATITESGKELGQPVDLVLSCVDNFEARMAINAACNERNLNWFESGVSENAVSGHIQFIRPGDTACFACAPPLVVAENIDEKTLKREGVCAASLPTTMGITAGFLVQNALKYLLNFGEVSDYLGYNALNDFFPRMTLKPNPQCDDRNCLLRQKEFQARPKPIEVKEDVSSSDEPLHATNEWGIELVADDEPVNCPEPAKSSAVVQGLKLAYEAPEKEKVEEENVATVSDETSLEDLMAQMKSM</sequence>
<keyword id="KW-0067">ATP-binding</keyword>
<keyword id="KW-0479">Metal-binding</keyword>
<keyword id="KW-0547">Nucleotide-binding</keyword>
<keyword id="KW-1185">Reference proteome</keyword>
<keyword id="KW-0833">Ubl conjugation pathway</keyword>
<keyword id="KW-0862">Zinc</keyword>
<name>UBA5_DROAN</name>
<accession>D1GY43</accession>
<accession>B3MAM7</accession>
<accession>D1GY50</accession>
<feature type="chain" id="PRO_0000391941" description="Ubiquitin-like modifier-activating enzyme 5">
    <location>
        <begin position="1"/>
        <end position="396"/>
    </location>
</feature>
<feature type="active site" description="Glycyl thioester intermediate" evidence="1">
    <location>
        <position position="243"/>
    </location>
</feature>
<feature type="binding site" evidence="1">
    <location>
        <position position="76"/>
    </location>
    <ligand>
        <name>ATP</name>
        <dbReference type="ChEBI" id="CHEBI:30616"/>
    </ligand>
</feature>
<feature type="binding site" evidence="1">
    <location>
        <position position="97"/>
    </location>
    <ligand>
        <name>ATP</name>
        <dbReference type="ChEBI" id="CHEBI:30616"/>
    </ligand>
</feature>
<feature type="binding site" evidence="1">
    <location>
        <position position="120"/>
    </location>
    <ligand>
        <name>ATP</name>
        <dbReference type="ChEBI" id="CHEBI:30616"/>
    </ligand>
</feature>
<feature type="binding site" evidence="1">
    <location>
        <position position="143"/>
    </location>
    <ligand>
        <name>ATP</name>
        <dbReference type="ChEBI" id="CHEBI:30616"/>
    </ligand>
</feature>
<feature type="binding site" evidence="1">
    <location>
        <position position="177"/>
    </location>
    <ligand>
        <name>ATP</name>
        <dbReference type="ChEBI" id="CHEBI:30616"/>
    </ligand>
</feature>
<feature type="binding site" evidence="1">
    <location>
        <position position="219"/>
    </location>
    <ligand>
        <name>Zn(2+)</name>
        <dbReference type="ChEBI" id="CHEBI:29105"/>
    </ligand>
</feature>
<feature type="binding site" evidence="1">
    <location>
        <position position="222"/>
    </location>
    <ligand>
        <name>Zn(2+)</name>
        <dbReference type="ChEBI" id="CHEBI:29105"/>
    </ligand>
</feature>
<feature type="binding site" evidence="1">
    <location>
        <position position="296"/>
    </location>
    <ligand>
        <name>Zn(2+)</name>
        <dbReference type="ChEBI" id="CHEBI:29105"/>
    </ligand>
</feature>
<feature type="binding site" evidence="1">
    <location>
        <position position="301"/>
    </location>
    <ligand>
        <name>Zn(2+)</name>
        <dbReference type="ChEBI" id="CHEBI:29105"/>
    </ligand>
</feature>
<feature type="sequence variant" description="In strain: BKK11, BKK13, BKK16, BKK4, BKK5, BKK7 and BKK8." evidence="2">
    <original>E</original>
    <variation>A</variation>
    <location>
        <position position="373"/>
    </location>
</feature>
<feature type="sequence variant" description="In strain: BKK9." evidence="2">
    <original>E</original>
    <variation>G</variation>
    <location>
        <position position="373"/>
    </location>
</feature>